<sequence>MRKMLAAVSRVLSGASQKPASRVLVASRNFANDATFEIKKCDLHRLEEGPPVTTVLTREDGLKYYRMMQTVRRMELKADQLYKQKIIRGFCHLCDGQEACCVGLEAGINPTDHLITAYRAHGFTFTRGLSVREILAELTGRKGGCAKGKGGSMHMYAKNFYGGNGIVGAQVPLGAGIALACKYNGKDEVCLTLYGDGAANQGQIFEAYNMAALWKLPCIFICENNRYGMGTSVERAAASTDYYKRGDFIPGLRVDGMDILCVREATRFAAAYCRSGKGPILMELQTYRYHGHSMSGPGVSYRTREEIQEVRSKSDPIMLLKDRMVNSNLASVEELKEIDVEVRKEIEDAAQFATADPEPPLEELGYHIYSSDPPFEVRGANQWIKFKSVS</sequence>
<keyword id="KW-0007">Acetylation</keyword>
<keyword id="KW-0119">Carbohydrate metabolism</keyword>
<keyword id="KW-0313">Glucose metabolism</keyword>
<keyword id="KW-0460">Magnesium</keyword>
<keyword id="KW-0479">Metal-binding</keyword>
<keyword id="KW-0496">Mitochondrion</keyword>
<keyword id="KW-0560">Oxidoreductase</keyword>
<keyword id="KW-0597">Phosphoprotein</keyword>
<keyword id="KW-0670">Pyruvate</keyword>
<keyword id="KW-1185">Reference proteome</keyword>
<keyword id="KW-0786">Thiamine pyrophosphate</keyword>
<keyword id="KW-0809">Transit peptide</keyword>
<keyword id="KW-0816">Tricarboxylic acid cycle</keyword>
<name>ODPA_PANTR</name>
<reference key="1">
    <citation type="journal article" date="2007" name="Gene">
        <title>Mapping of chimpanzee full-length cDNAs onto the human genome unveils large potential divergence of the transcriptome.</title>
        <authorList>
            <person name="Sakate R."/>
            <person name="Suto Y."/>
            <person name="Imanishi T."/>
            <person name="Tanoue T."/>
            <person name="Hida M."/>
            <person name="Hayasaka I."/>
            <person name="Kusuda J."/>
            <person name="Gojobori T."/>
            <person name="Hashimoto K."/>
            <person name="Hirai M."/>
        </authorList>
    </citation>
    <scope>NUCLEOTIDE SEQUENCE [MRNA]</scope>
    <source>
        <tissue>Brain</tissue>
    </source>
</reference>
<accession>A5A6L0</accession>
<feature type="transit peptide" description="Mitochondrion" evidence="1">
    <location>
        <begin position="1"/>
        <end position="29"/>
    </location>
</feature>
<feature type="chain" id="PRO_0000297491" description="Pyruvate dehydrogenase E1 component subunit alpha, somatic form, mitochondrial">
    <location>
        <begin position="30"/>
        <end position="390"/>
    </location>
</feature>
<feature type="binding site" evidence="2">
    <location>
        <position position="92"/>
    </location>
    <ligand>
        <name>pyruvate</name>
        <dbReference type="ChEBI" id="CHEBI:15361"/>
    </ligand>
</feature>
<feature type="binding site" evidence="2">
    <location>
        <position position="118"/>
    </location>
    <ligand>
        <name>pyruvate</name>
        <dbReference type="ChEBI" id="CHEBI:15361"/>
    </ligand>
</feature>
<feature type="binding site" evidence="2">
    <location>
        <position position="118"/>
    </location>
    <ligand>
        <name>thiamine diphosphate</name>
        <dbReference type="ChEBI" id="CHEBI:58937"/>
        <note>ligand shared with beta subunit</note>
    </ligand>
</feature>
<feature type="binding site" evidence="2">
    <location>
        <position position="119"/>
    </location>
    <ligand>
        <name>pyruvate</name>
        <dbReference type="ChEBI" id="CHEBI:15361"/>
    </ligand>
</feature>
<feature type="binding site" evidence="2">
    <location>
        <position position="119"/>
    </location>
    <ligand>
        <name>thiamine diphosphate</name>
        <dbReference type="ChEBI" id="CHEBI:58937"/>
        <note>ligand shared with beta subunit</note>
    </ligand>
</feature>
<feature type="binding site" evidence="2">
    <location>
        <position position="157"/>
    </location>
    <ligand>
        <name>pyruvate</name>
        <dbReference type="ChEBI" id="CHEBI:15361"/>
    </ligand>
</feature>
<feature type="binding site" evidence="2">
    <location>
        <position position="165"/>
    </location>
    <ligand>
        <name>pyruvate</name>
        <dbReference type="ChEBI" id="CHEBI:15361"/>
    </ligand>
</feature>
<feature type="binding site" evidence="2">
    <location>
        <position position="165"/>
    </location>
    <ligand>
        <name>thiamine diphosphate</name>
        <dbReference type="ChEBI" id="CHEBI:58937"/>
        <note>ligand shared with beta subunit</note>
    </ligand>
</feature>
<feature type="binding site" evidence="2">
    <location>
        <position position="167"/>
    </location>
    <ligand>
        <name>pyruvate</name>
        <dbReference type="ChEBI" id="CHEBI:15361"/>
    </ligand>
</feature>
<feature type="binding site" evidence="2">
    <location>
        <position position="167"/>
    </location>
    <ligand>
        <name>thiamine diphosphate</name>
        <dbReference type="ChEBI" id="CHEBI:58937"/>
        <note>ligand shared with beta subunit</note>
    </ligand>
</feature>
<feature type="binding site" evidence="2">
    <location>
        <position position="196"/>
    </location>
    <ligand>
        <name>Mg(2+)</name>
        <dbReference type="ChEBI" id="CHEBI:18420"/>
    </ligand>
</feature>
<feature type="binding site" evidence="2">
    <location>
        <position position="196"/>
    </location>
    <ligand>
        <name>pyruvate</name>
        <dbReference type="ChEBI" id="CHEBI:15361"/>
    </ligand>
</feature>
<feature type="binding site" evidence="2">
    <location>
        <position position="196"/>
    </location>
    <ligand>
        <name>thiamine diphosphate</name>
        <dbReference type="ChEBI" id="CHEBI:58937"/>
        <note>ligand shared with beta subunit</note>
    </ligand>
</feature>
<feature type="binding site" evidence="2">
    <location>
        <position position="197"/>
    </location>
    <ligand>
        <name>pyruvate</name>
        <dbReference type="ChEBI" id="CHEBI:15361"/>
    </ligand>
</feature>
<feature type="binding site" evidence="2">
    <location>
        <position position="197"/>
    </location>
    <ligand>
        <name>thiamine diphosphate</name>
        <dbReference type="ChEBI" id="CHEBI:58937"/>
        <note>ligand shared with beta subunit</note>
    </ligand>
</feature>
<feature type="binding site" evidence="2">
    <location>
        <position position="198"/>
    </location>
    <ligand>
        <name>pyruvate</name>
        <dbReference type="ChEBI" id="CHEBI:15361"/>
    </ligand>
</feature>
<feature type="binding site" evidence="2">
    <location>
        <position position="198"/>
    </location>
    <ligand>
        <name>thiamine diphosphate</name>
        <dbReference type="ChEBI" id="CHEBI:58937"/>
        <note>ligand shared with beta subunit</note>
    </ligand>
</feature>
<feature type="binding site" evidence="2">
    <location>
        <position position="225"/>
    </location>
    <ligand>
        <name>Mg(2+)</name>
        <dbReference type="ChEBI" id="CHEBI:18420"/>
    </ligand>
</feature>
<feature type="binding site" evidence="2">
    <location>
        <position position="225"/>
    </location>
    <ligand>
        <name>pyruvate</name>
        <dbReference type="ChEBI" id="CHEBI:15361"/>
    </ligand>
</feature>
<feature type="binding site" evidence="2">
    <location>
        <position position="225"/>
    </location>
    <ligand>
        <name>thiamine diphosphate</name>
        <dbReference type="ChEBI" id="CHEBI:58937"/>
        <note>ligand shared with beta subunit</note>
    </ligand>
</feature>
<feature type="binding site" evidence="2">
    <location>
        <position position="227"/>
    </location>
    <ligand>
        <name>Mg(2+)</name>
        <dbReference type="ChEBI" id="CHEBI:18420"/>
    </ligand>
</feature>
<feature type="binding site" evidence="2">
    <location>
        <position position="227"/>
    </location>
    <ligand>
        <name>pyruvate</name>
        <dbReference type="ChEBI" id="CHEBI:15361"/>
    </ligand>
</feature>
<feature type="binding site" evidence="2">
    <location>
        <position position="292"/>
    </location>
    <ligand>
        <name>thiamine diphosphate</name>
        <dbReference type="ChEBI" id="CHEBI:58937"/>
        <note>ligand shared with beta subunit</note>
    </ligand>
</feature>
<feature type="modified residue" description="N6-acetyllysine; alternate" evidence="3">
    <location>
        <position position="63"/>
    </location>
</feature>
<feature type="modified residue" description="N6-succinyllysine; alternate" evidence="3">
    <location>
        <position position="63"/>
    </location>
</feature>
<feature type="modified residue" description="Phosphoserine; by PDK1" evidence="2">
    <location>
        <position position="232"/>
    </location>
</feature>
<feature type="modified residue" description="N6-acetyllysine; alternate" evidence="3">
    <location>
        <position position="244"/>
    </location>
</feature>
<feature type="modified residue" description="N6-succinyllysine; alternate" evidence="3">
    <location>
        <position position="244"/>
    </location>
</feature>
<feature type="modified residue" description="N6-succinyllysine" evidence="3">
    <location>
        <position position="277"/>
    </location>
</feature>
<feature type="modified residue" description="Phosphoserine; by PDK1, PDK2, PDK3 and PDK4" evidence="2">
    <location>
        <position position="293"/>
    </location>
</feature>
<feature type="modified residue" description="Phosphoserine" evidence="3">
    <location>
        <position position="295"/>
    </location>
</feature>
<feature type="modified residue" description="Phosphoserine; by PDK1, PDK2, PDK3 and PDK4" evidence="2">
    <location>
        <position position="300"/>
    </location>
</feature>
<feature type="modified residue" description="Phosphotyrosine" evidence="3">
    <location>
        <position position="301"/>
    </location>
</feature>
<feature type="modified residue" description="N6-acetyllysine; alternate" evidence="3">
    <location>
        <position position="313"/>
    </location>
</feature>
<feature type="modified residue" description="N6-succinyllysine; alternate" evidence="3">
    <location>
        <position position="313"/>
    </location>
</feature>
<feature type="modified residue" description="N6-acetyllysine" evidence="2">
    <location>
        <position position="321"/>
    </location>
</feature>
<feature type="modified residue" description="N6-acetyllysine" evidence="3">
    <location>
        <position position="336"/>
    </location>
</feature>
<feature type="modified residue" description="N6-succinyllysine" evidence="3">
    <location>
        <position position="385"/>
    </location>
</feature>
<protein>
    <recommendedName>
        <fullName>Pyruvate dehydrogenase E1 component subunit alpha, somatic form, mitochondrial</fullName>
        <ecNumber>1.2.4.1</ecNumber>
    </recommendedName>
    <alternativeName>
        <fullName>PDHE1-A type I</fullName>
    </alternativeName>
</protein>
<comment type="function">
    <text evidence="1">The pyruvate dehydrogenase complex catalyzes the overall conversion of pyruvate to acetyl-CoA and CO(2), and thereby links the glycolytic pathway to the tricarboxylic cycle.</text>
</comment>
<comment type="catalytic activity">
    <reaction>
        <text>N(6)-[(R)-lipoyl]-L-lysyl-[protein] + pyruvate + H(+) = N(6)-[(R)-S(8)-acetyldihydrolipoyl]-L-lysyl-[protein] + CO2</text>
        <dbReference type="Rhea" id="RHEA:19189"/>
        <dbReference type="Rhea" id="RHEA-COMP:10474"/>
        <dbReference type="Rhea" id="RHEA-COMP:10478"/>
        <dbReference type="ChEBI" id="CHEBI:15361"/>
        <dbReference type="ChEBI" id="CHEBI:15378"/>
        <dbReference type="ChEBI" id="CHEBI:16526"/>
        <dbReference type="ChEBI" id="CHEBI:83099"/>
        <dbReference type="ChEBI" id="CHEBI:83111"/>
        <dbReference type="EC" id="1.2.4.1"/>
    </reaction>
</comment>
<comment type="cofactor">
    <cofactor evidence="2">
        <name>thiamine diphosphate</name>
        <dbReference type="ChEBI" id="CHEBI:58937"/>
    </cofactor>
    <cofactor evidence="2">
        <name>Mg(2+)</name>
        <dbReference type="ChEBI" id="CHEBI:18420"/>
    </cofactor>
</comment>
<comment type="activity regulation">
    <text evidence="1">Pyruvate dehydrogenase activity is inhibited by phosphorylation of PDHA1; it is reactivated by dephosphorylation.</text>
</comment>
<comment type="subunit">
    <text evidence="1">Heterotetramer of two PDHA1 and two PDHB subunits. The heterotetramer interacts with DLAT, and is part of the multimeric pyruvate dehydrogenase complex that contains multiple copies of pyruvate dehydrogenase (E1), dihydrolipoamide acetyltransferase (DLAT, E2) and lipoamide dehydrogenase (DLD, E3). These subunits are bound to an inner core composed of about 48 DLAT and 12 PDHX molecules (By similarity).</text>
</comment>
<comment type="subcellular location">
    <subcellularLocation>
        <location evidence="1">Mitochondrion matrix</location>
    </subcellularLocation>
</comment>
<comment type="PTM">
    <text evidence="1">Phosphorylation at Ser-232, Ser-293 and Ser-300 by PDK family kinases inactivates the enzyme; for this phosphorylation at a single site is sufficient. Phosphorylation at Ser-293 interferes with access to active site, and thereby inactivates the enzyme. Dephosphorylation at all three sites, i.e. at Ser-232, Ser-293 and Ser-300, is required for reactivation (By similarity).</text>
</comment>
<comment type="PTM">
    <text evidence="1">Acetylation alters the phosphorylation pattern. Deacetylated by SIRT3 (By similarity).</text>
</comment>
<organism>
    <name type="scientific">Pan troglodytes</name>
    <name type="common">Chimpanzee</name>
    <dbReference type="NCBI Taxonomy" id="9598"/>
    <lineage>
        <taxon>Eukaryota</taxon>
        <taxon>Metazoa</taxon>
        <taxon>Chordata</taxon>
        <taxon>Craniata</taxon>
        <taxon>Vertebrata</taxon>
        <taxon>Euteleostomi</taxon>
        <taxon>Mammalia</taxon>
        <taxon>Eutheria</taxon>
        <taxon>Euarchontoglires</taxon>
        <taxon>Primates</taxon>
        <taxon>Haplorrhini</taxon>
        <taxon>Catarrhini</taxon>
        <taxon>Hominidae</taxon>
        <taxon>Pan</taxon>
    </lineage>
</organism>
<proteinExistence type="evidence at transcript level"/>
<dbReference type="EC" id="1.2.4.1"/>
<dbReference type="EMBL" id="AB222138">
    <property type="protein sequence ID" value="BAF62383.1"/>
    <property type="molecule type" value="mRNA"/>
</dbReference>
<dbReference type="RefSeq" id="NP_001104283.1">
    <property type="nucleotide sequence ID" value="NM_001110813.1"/>
</dbReference>
<dbReference type="SMR" id="A5A6L0"/>
<dbReference type="FunCoup" id="A5A6L0">
    <property type="interactions" value="1704"/>
</dbReference>
<dbReference type="STRING" id="9598.ENSPTRP00000088760"/>
<dbReference type="PaxDb" id="9598-ENSPTRP00000037227"/>
<dbReference type="GeneID" id="465525"/>
<dbReference type="KEGG" id="ptr:465525"/>
<dbReference type="CTD" id="5160"/>
<dbReference type="eggNOG" id="KOG0225">
    <property type="taxonomic scope" value="Eukaryota"/>
</dbReference>
<dbReference type="InParanoid" id="A5A6L0"/>
<dbReference type="OrthoDB" id="7168at9604"/>
<dbReference type="Proteomes" id="UP000002277">
    <property type="component" value="Unplaced"/>
</dbReference>
<dbReference type="GO" id="GO:0005759">
    <property type="term" value="C:mitochondrial matrix"/>
    <property type="evidence" value="ECO:0007669"/>
    <property type="project" value="UniProtKB-SubCell"/>
</dbReference>
<dbReference type="GO" id="GO:0045254">
    <property type="term" value="C:pyruvate dehydrogenase complex"/>
    <property type="evidence" value="ECO:0000250"/>
    <property type="project" value="UniProtKB"/>
</dbReference>
<dbReference type="GO" id="GO:0046872">
    <property type="term" value="F:metal ion binding"/>
    <property type="evidence" value="ECO:0007669"/>
    <property type="project" value="UniProtKB-KW"/>
</dbReference>
<dbReference type="GO" id="GO:0004739">
    <property type="term" value="F:pyruvate dehydrogenase (acetyl-transferring) activity"/>
    <property type="evidence" value="ECO:0000318"/>
    <property type="project" value="GO_Central"/>
</dbReference>
<dbReference type="GO" id="GO:0006006">
    <property type="term" value="P:glucose metabolic process"/>
    <property type="evidence" value="ECO:0007669"/>
    <property type="project" value="UniProtKB-KW"/>
</dbReference>
<dbReference type="GO" id="GO:0006086">
    <property type="term" value="P:pyruvate decarboxylation to acetyl-CoA"/>
    <property type="evidence" value="ECO:0000250"/>
    <property type="project" value="UniProtKB"/>
</dbReference>
<dbReference type="GO" id="GO:0006099">
    <property type="term" value="P:tricarboxylic acid cycle"/>
    <property type="evidence" value="ECO:0007669"/>
    <property type="project" value="UniProtKB-KW"/>
</dbReference>
<dbReference type="CDD" id="cd02000">
    <property type="entry name" value="TPP_E1_PDC_ADC_BCADC"/>
    <property type="match status" value="1"/>
</dbReference>
<dbReference type="FunFam" id="3.40.50.970:FF:000020">
    <property type="entry name" value="Pyruvate dehydrogenase E1 component subunit alpha, mitochondrial"/>
    <property type="match status" value="1"/>
</dbReference>
<dbReference type="Gene3D" id="3.40.50.970">
    <property type="match status" value="1"/>
</dbReference>
<dbReference type="InterPro" id="IPR001017">
    <property type="entry name" value="DH_E1"/>
</dbReference>
<dbReference type="InterPro" id="IPR050642">
    <property type="entry name" value="PDH_E1_Alpha_Subunit"/>
</dbReference>
<dbReference type="InterPro" id="IPR017597">
    <property type="entry name" value="Pyrv_DH_E1_asu_subgrp-y"/>
</dbReference>
<dbReference type="InterPro" id="IPR029061">
    <property type="entry name" value="THDP-binding"/>
</dbReference>
<dbReference type="NCBIfam" id="TIGR03182">
    <property type="entry name" value="PDH_E1_alph_y"/>
    <property type="match status" value="1"/>
</dbReference>
<dbReference type="PANTHER" id="PTHR11516:SF52">
    <property type="entry name" value="PYRUVATE DEHYDROGENASE E1 COMPONENT SUBUNIT ALPHA, SOMATIC FORM, MITOCHONDRIAL"/>
    <property type="match status" value="1"/>
</dbReference>
<dbReference type="PANTHER" id="PTHR11516">
    <property type="entry name" value="PYRUVATE DEHYDROGENASE E1 COMPONENT, ALPHA SUBUNIT BACTERIAL AND ORGANELLAR"/>
    <property type="match status" value="1"/>
</dbReference>
<dbReference type="Pfam" id="PF00676">
    <property type="entry name" value="E1_dh"/>
    <property type="match status" value="1"/>
</dbReference>
<dbReference type="SUPFAM" id="SSF52518">
    <property type="entry name" value="Thiamin diphosphate-binding fold (THDP-binding)"/>
    <property type="match status" value="1"/>
</dbReference>
<gene>
    <name type="primary">PDHA1</name>
</gene>
<evidence type="ECO:0000250" key="1"/>
<evidence type="ECO:0000250" key="2">
    <source>
        <dbReference type="UniProtKB" id="P08559"/>
    </source>
</evidence>
<evidence type="ECO:0000250" key="3">
    <source>
        <dbReference type="UniProtKB" id="P35486"/>
    </source>
</evidence>